<keyword id="KW-0002">3D-structure</keyword>
<keyword id="KW-0131">Cell cycle</keyword>
<keyword id="KW-0132">Cell division</keyword>
<keyword id="KW-0159">Chromosome partition</keyword>
<keyword id="KW-0963">Cytoplasm</keyword>
<keyword id="KW-0539">Nucleus</keyword>
<keyword id="KW-1185">Reference proteome</keyword>
<accession>Q18490</accession>
<comment type="function">
    <text evidence="2 3 8">Component of the tost-1 variant of the PETISCO complex which plays an essential role in embryogenesis (PubMed:31147388, PubMed:31216475). Within the complex acts as an adapter which binds to the complex via erh-2 (PubMed:31147388). Does not seem to play a role in the biogenesis of a class of 21 nucleotide PIWI-interacting RNAs (piRNAs) that possess a uracil residue at the 5'-end (also called 21U-RNAs) (PubMed:31147388). May inhibit 21U-RNA accumulation (PubMed:31216475). Required for chromosome segregation and cell division in early embryos (PubMed:31216475).</text>
</comment>
<comment type="subunit">
    <text evidence="2 3 8">Component of the tost-1 variant of the PETISCO complex (also called the pid-3, erh-2, tofu-6, and ife-3 small RNA complex) containing at least tost-1, tofu-6, ife-3, pid-3, and erh-2, which plays an essential role in embryogenesis (PubMed:31147388, PubMed:31216475). Within the complex interacts with erh-2 (PubMed:31147388, PubMed:31216475). Within the complex interacts with pid-3 and tofu-6 (PubMed:31216475). In contrast to the pid-1 variant of the PETISCO complex, the tost-1 variant of the PETISCO complex plays a minor role in the biogenesis of a class of 21 nucleotide PIWI-interacting RNAs (piRNAs) that possess a uracil residue at the 5'-end (also called 21U-RNAs) (PubMed:31147388).</text>
</comment>
<comment type="interaction">
    <interactant intactId="EBI-21447173">
        <id>Q18490</id>
    </interactant>
    <interactant intactId="EBI-21447087">
        <id>Q20057</id>
        <label>erh-2</label>
    </interactant>
    <organismsDiffer>false</organismsDiffer>
    <experiments>3</experiments>
</comment>
<comment type="subcellular location">
    <subcellularLocation>
        <location evidence="3">Cytoplasm</location>
    </subcellularLocation>
    <subcellularLocation>
        <location evidence="3">Nucleus</location>
    </subcellularLocation>
    <text evidence="3">During early embryogenesis, localizes to the nucleus at prophase of cell division, and remains in the cytosol at interphase in 2- and 4-cell embryos (PubMed:31216475). Mainly localizes to the germline cytoplasm (PubMed:31216475).</text>
</comment>
<comment type="tissue specificity">
    <text evidence="3">Expressed in the germline.</text>
</comment>
<comment type="developmental stage">
    <text evidence="3">During early embryogenesis, expressed during prophase and interphase in 2- and 4-cell embryos.</text>
</comment>
<comment type="disruption phenotype">
    <text evidence="2 3">RNAi-mediated knockdown results in embryonic lethality (PubMed:31147388). RNAi-mediated knockdown results in chromosome segregation and cell division defects in early embryos (PubMed:31216475). RNAi-mediated knockdown enhances the activity of the PIWI-interacting RNA (piRNA) silencing pathway (PubMed:31147388). RNAi-mediated knockdown disrupts the localization of tofu-6 to the perinuclear region of the germline (PubMed:31216475). RNAi-mediated knockdown results in larger tofu-6-, erh-2- and pid-3-expressing foci (PubMed:31216475).</text>
</comment>
<gene>
    <name evidence="4 10" type="primary">tost-1</name>
    <name evidence="10" type="ORF">C35D10.13</name>
</gene>
<dbReference type="EMBL" id="BX284603">
    <property type="protein sequence ID" value="CCD66786.1"/>
    <property type="molecule type" value="Genomic_DNA"/>
</dbReference>
<dbReference type="PIR" id="S72577">
    <property type="entry name" value="S72577"/>
</dbReference>
<dbReference type="RefSeq" id="NP_498019.1">
    <property type="nucleotide sequence ID" value="NM_065618.2"/>
</dbReference>
<dbReference type="PDB" id="7EJO">
    <property type="method" value="X-ray"/>
    <property type="resolution" value="2.19 A"/>
    <property type="chains" value="A=34-54"/>
</dbReference>
<dbReference type="PDBsum" id="7EJO"/>
<dbReference type="SMR" id="Q18490"/>
<dbReference type="ComplexPortal" id="CPX-4307">
    <property type="entry name" value="PETISCO, tost-1 variant"/>
</dbReference>
<dbReference type="FunCoup" id="Q18490">
    <property type="interactions" value="1737"/>
</dbReference>
<dbReference type="IntAct" id="Q18490">
    <property type="interactions" value="4"/>
</dbReference>
<dbReference type="STRING" id="6239.C35D10.13.1"/>
<dbReference type="PaxDb" id="6239-C35D10.13"/>
<dbReference type="PeptideAtlas" id="Q18490"/>
<dbReference type="EnsemblMetazoa" id="C35D10.13.1">
    <property type="protein sequence ID" value="C35D10.13.1"/>
    <property type="gene ID" value="WBGene00016449"/>
</dbReference>
<dbReference type="GeneID" id="183241"/>
<dbReference type="KEGG" id="cel:CELE_C35D10.13"/>
<dbReference type="UCSC" id="C35D10.13">
    <property type="organism name" value="c. elegans"/>
</dbReference>
<dbReference type="AGR" id="WB:WBGene00016449"/>
<dbReference type="CTD" id="183241"/>
<dbReference type="WormBase" id="C35D10.13">
    <property type="protein sequence ID" value="CE01194"/>
    <property type="gene ID" value="WBGene00016449"/>
    <property type="gene designation" value="tost-1"/>
</dbReference>
<dbReference type="eggNOG" id="ENOG502TI4E">
    <property type="taxonomic scope" value="Eukaryota"/>
</dbReference>
<dbReference type="HOGENOM" id="CLU_1866923_0_0_1"/>
<dbReference type="InParanoid" id="Q18490"/>
<dbReference type="OMA" id="KHPTTEV"/>
<dbReference type="OrthoDB" id="5794265at2759"/>
<dbReference type="PRO" id="PR:Q18490"/>
<dbReference type="Proteomes" id="UP000001940">
    <property type="component" value="Chromosome III"/>
</dbReference>
<dbReference type="Bgee" id="WBGene00016449">
    <property type="expression patterns" value="Expressed in germ line (C elegans) and 4 other cell types or tissues"/>
</dbReference>
<dbReference type="GO" id="GO:0005737">
    <property type="term" value="C:cytoplasm"/>
    <property type="evidence" value="ECO:0000314"/>
    <property type="project" value="UniProtKB"/>
</dbReference>
<dbReference type="GO" id="GO:0005634">
    <property type="term" value="C:nucleus"/>
    <property type="evidence" value="ECO:0000314"/>
    <property type="project" value="UniProtKB"/>
</dbReference>
<dbReference type="GO" id="GO:0048471">
    <property type="term" value="C:perinuclear region of cytoplasm"/>
    <property type="evidence" value="ECO:0000314"/>
    <property type="project" value="UniProtKB"/>
</dbReference>
<dbReference type="GO" id="GO:0034518">
    <property type="term" value="C:RNA cap binding complex"/>
    <property type="evidence" value="ECO:0000353"/>
    <property type="project" value="ComplexPortal"/>
</dbReference>
<dbReference type="GO" id="GO:0051301">
    <property type="term" value="P:cell division"/>
    <property type="evidence" value="ECO:0007669"/>
    <property type="project" value="UniProtKB-KW"/>
</dbReference>
<dbReference type="GO" id="GO:0007059">
    <property type="term" value="P:chromosome segregation"/>
    <property type="evidence" value="ECO:0007669"/>
    <property type="project" value="UniProtKB-KW"/>
</dbReference>
<dbReference type="GO" id="GO:0009792">
    <property type="term" value="P:embryo development ending in birth or egg hatching"/>
    <property type="evidence" value="ECO:0000303"/>
    <property type="project" value="ComplexPortal"/>
</dbReference>
<dbReference type="GO" id="GO:0051781">
    <property type="term" value="P:positive regulation of cell division"/>
    <property type="evidence" value="ECO:0000315"/>
    <property type="project" value="UniProtKB"/>
</dbReference>
<dbReference type="GO" id="GO:0051984">
    <property type="term" value="P:positive regulation of chromosome segregation"/>
    <property type="evidence" value="ECO:0000315"/>
    <property type="project" value="UniProtKB"/>
</dbReference>
<sequence length="142" mass="16221">MTTAIQYQVIPLADREHSNKVASILENKYKTATNKRITLNERFGVLEKGYTIQATEPETVKNDSDVFFVVHDRNLNSKKEFVENYLAKNPIVNSPEKVFEEEDKENAPTKKAVLKPSSTDEKKLTSSDIYIQEITRSILQSV</sequence>
<feature type="chain" id="PRO_0000452469" description="Protein tost-1">
    <location>
        <begin position="1"/>
        <end position="142"/>
    </location>
</feature>
<feature type="region of interest" description="Disordered" evidence="1">
    <location>
        <begin position="97"/>
        <end position="123"/>
    </location>
</feature>
<feature type="site" description="May be required for interaction with erh-2" evidence="7">
    <location>
        <position position="42"/>
    </location>
</feature>
<feature type="mutagenesis site" description="May abolish the interaction with erh-2." evidence="2">
    <original>R</original>
    <variation>C</variation>
    <location>
        <position position="42"/>
    </location>
</feature>
<feature type="helix" evidence="11">
    <location>
        <begin position="39"/>
        <end position="47"/>
    </location>
</feature>
<evidence type="ECO:0000256" key="1">
    <source>
        <dbReference type="SAM" id="MobiDB-lite"/>
    </source>
</evidence>
<evidence type="ECO:0000269" key="2">
    <source>
    </source>
</evidence>
<evidence type="ECO:0000269" key="3">
    <source>
    </source>
</evidence>
<evidence type="ECO:0000303" key="4">
    <source>
    </source>
</evidence>
<evidence type="ECO:0000303" key="5">
    <source>
    </source>
</evidence>
<evidence type="ECO:0000305" key="6"/>
<evidence type="ECO:0000305" key="7">
    <source>
    </source>
</evidence>
<evidence type="ECO:0000305" key="8">
    <source>
    </source>
</evidence>
<evidence type="ECO:0000312" key="9">
    <source>
        <dbReference type="Proteomes" id="UP000001940"/>
    </source>
</evidence>
<evidence type="ECO:0000312" key="10">
    <source>
        <dbReference type="WormBase" id="C35D10.13"/>
    </source>
</evidence>
<evidence type="ECO:0007829" key="11">
    <source>
        <dbReference type="PDB" id="7EJO"/>
    </source>
</evidence>
<protein>
    <recommendedName>
        <fullName evidence="6">Protein tost-1</fullName>
    </recommendedName>
    <alternativeName>
        <fullName evidence="5">Twenty one u antagonist 1</fullName>
    </alternativeName>
</protein>
<organism evidence="9">
    <name type="scientific">Caenorhabditis elegans</name>
    <dbReference type="NCBI Taxonomy" id="6239"/>
    <lineage>
        <taxon>Eukaryota</taxon>
        <taxon>Metazoa</taxon>
        <taxon>Ecdysozoa</taxon>
        <taxon>Nematoda</taxon>
        <taxon>Chromadorea</taxon>
        <taxon>Rhabditida</taxon>
        <taxon>Rhabditina</taxon>
        <taxon>Rhabditomorpha</taxon>
        <taxon>Rhabditoidea</taxon>
        <taxon>Rhabditidae</taxon>
        <taxon>Peloderinae</taxon>
        <taxon>Caenorhabditis</taxon>
    </lineage>
</organism>
<name>TOST1_CAEEL</name>
<reference evidence="9" key="1">
    <citation type="journal article" date="1998" name="Science">
        <title>Genome sequence of the nematode C. elegans: a platform for investigating biology.</title>
        <authorList>
            <consortium name="The C. elegans sequencing consortium"/>
        </authorList>
    </citation>
    <scope>NUCLEOTIDE SEQUENCE [LARGE SCALE GENOMIC DNA]</scope>
    <source>
        <strain evidence="9">Bristol N2</strain>
    </source>
</reference>
<reference evidence="6" key="2">
    <citation type="journal article" date="2019" name="Cell Rep.">
        <title>Functional Proteomics Identifies a PICS Complex Required for piRNA Maturation and Chromosome Segregation.</title>
        <authorList>
            <person name="Zeng C."/>
            <person name="Weng C."/>
            <person name="Wang X."/>
            <person name="Yan Y.H."/>
            <person name="Li W.J."/>
            <person name="Xu D."/>
            <person name="Hong M."/>
            <person name="Liao S."/>
            <person name="Dong M.Q."/>
            <person name="Feng X."/>
            <person name="Xu C."/>
            <person name="Guang S."/>
        </authorList>
    </citation>
    <scope>FUNCTION</scope>
    <scope>IDENTIFICATION IN THE PETISCO COMPLEX</scope>
    <scope>INTERACTION WITH ERH-2; PID-3 AND TOFU-6</scope>
    <scope>SUBCELLULAR LOCATION</scope>
    <scope>TISSUE SPECIFICITY</scope>
    <scope>DEVELOPMENTAL STAGE</scope>
    <scope>DISRUPTION PHENOTYPE</scope>
</reference>
<reference evidence="6" key="3">
    <citation type="journal article" date="2019" name="Genes Dev.">
        <title>PETISCO is a novel protein complex required for 21U RNA biogenesis and embryonic viability.</title>
        <authorList>
            <person name="Cordeiro Rodrigues R.J."/>
            <person name="de Jesus Domingues A.M."/>
            <person name="Hellmann S."/>
            <person name="Dietz S."/>
            <person name="de Albuquerque B.F.M."/>
            <person name="Renz C."/>
            <person name="Ulrich H.D."/>
            <person name="Sarkies P."/>
            <person name="Butter F."/>
            <person name="Ketting R.F."/>
        </authorList>
    </citation>
    <scope>FUNCTION</scope>
    <scope>IDENTIFICATION IN THE PETISCO COMPLEX</scope>
    <scope>INTERACTION WITH ERH-2</scope>
    <scope>DISRUPTION PHENOTYPE</scope>
    <scope>MUTAGENESIS OF ARG-42</scope>
</reference>
<proteinExistence type="evidence at protein level"/>